<sequence>MQQHLKYKIMTNIKHLAIIMDGNARWADQHNLTKSEGHKAGADKIRELLPEFLNLNIPYITLYTFSSENWQRSSTEVDFLIKLLSIYLKTELNNLHKNGVKIKVIGRLTLLSSSLQKQINNAIELTKNNNKITLCIAFSYGSRQEIVDACTKIITSGKKAVSDSDIQHALYDPEMPDVDLLIRPGGVYRISNFLLWQAAYAELYFSPKYWPDFNKYDIQEAINDYSKRKRTFGKR</sequence>
<accession>Q92I30</accession>
<gene>
    <name evidence="1" type="primary">uppS</name>
    <name type="ordered locus">RC0590</name>
</gene>
<reference key="1">
    <citation type="journal article" date="2001" name="Science">
        <title>Mechanisms of evolution in Rickettsia conorii and R. prowazekii.</title>
        <authorList>
            <person name="Ogata H."/>
            <person name="Audic S."/>
            <person name="Renesto-Audiffren P."/>
            <person name="Fournier P.-E."/>
            <person name="Barbe V."/>
            <person name="Samson D."/>
            <person name="Roux V."/>
            <person name="Cossart P."/>
            <person name="Weissenbach J."/>
            <person name="Claverie J.-M."/>
            <person name="Raoult D."/>
        </authorList>
    </citation>
    <scope>NUCLEOTIDE SEQUENCE [LARGE SCALE GENOMIC DNA]</scope>
    <source>
        <strain>ATCC VR-613 / Malish 7</strain>
    </source>
</reference>
<evidence type="ECO:0000255" key="1">
    <source>
        <dbReference type="HAMAP-Rule" id="MF_01139"/>
    </source>
</evidence>
<feature type="chain" id="PRO_0000123661" description="Isoprenyl transferase">
    <location>
        <begin position="1"/>
        <end position="235"/>
    </location>
</feature>
<feature type="active site" evidence="1">
    <location>
        <position position="21"/>
    </location>
</feature>
<feature type="active site" description="Proton acceptor" evidence="1">
    <location>
        <position position="69"/>
    </location>
</feature>
<feature type="binding site" evidence="1">
    <location>
        <position position="21"/>
    </location>
    <ligand>
        <name>Mg(2+)</name>
        <dbReference type="ChEBI" id="CHEBI:18420"/>
    </ligand>
</feature>
<feature type="binding site" evidence="1">
    <location>
        <begin position="22"/>
        <end position="25"/>
    </location>
    <ligand>
        <name>substrate</name>
    </ligand>
</feature>
<feature type="binding site" evidence="1">
    <location>
        <position position="26"/>
    </location>
    <ligand>
        <name>substrate</name>
    </ligand>
</feature>
<feature type="binding site" evidence="1">
    <location>
        <position position="34"/>
    </location>
    <ligand>
        <name>substrate</name>
    </ligand>
</feature>
<feature type="binding site" evidence="1">
    <location>
        <position position="38"/>
    </location>
    <ligand>
        <name>substrate</name>
    </ligand>
</feature>
<feature type="binding site" evidence="1">
    <location>
        <begin position="66"/>
        <end position="68"/>
    </location>
    <ligand>
        <name>substrate</name>
    </ligand>
</feature>
<feature type="binding site" evidence="1">
    <location>
        <position position="70"/>
    </location>
    <ligand>
        <name>substrate</name>
    </ligand>
</feature>
<feature type="binding site" evidence="1">
    <location>
        <position position="72"/>
    </location>
    <ligand>
        <name>substrate</name>
    </ligand>
</feature>
<feature type="binding site" evidence="1">
    <location>
        <position position="183"/>
    </location>
    <ligand>
        <name>substrate</name>
    </ligand>
</feature>
<feature type="binding site" evidence="1">
    <location>
        <begin position="189"/>
        <end position="191"/>
    </location>
    <ligand>
        <name>substrate</name>
    </ligand>
</feature>
<feature type="binding site" evidence="1">
    <location>
        <position position="202"/>
    </location>
    <ligand>
        <name>Mg(2+)</name>
        <dbReference type="ChEBI" id="CHEBI:18420"/>
    </ligand>
</feature>
<organism>
    <name type="scientific">Rickettsia conorii (strain ATCC VR-613 / Malish 7)</name>
    <dbReference type="NCBI Taxonomy" id="272944"/>
    <lineage>
        <taxon>Bacteria</taxon>
        <taxon>Pseudomonadati</taxon>
        <taxon>Pseudomonadota</taxon>
        <taxon>Alphaproteobacteria</taxon>
        <taxon>Rickettsiales</taxon>
        <taxon>Rickettsiaceae</taxon>
        <taxon>Rickettsieae</taxon>
        <taxon>Rickettsia</taxon>
        <taxon>spotted fever group</taxon>
    </lineage>
</organism>
<proteinExistence type="inferred from homology"/>
<dbReference type="EC" id="2.5.1.-" evidence="1"/>
<dbReference type="EMBL" id="AE006914">
    <property type="protein sequence ID" value="AAL03128.1"/>
    <property type="molecule type" value="Genomic_DNA"/>
</dbReference>
<dbReference type="PIR" id="F97773">
    <property type="entry name" value="F97773"/>
</dbReference>
<dbReference type="SMR" id="Q92I30"/>
<dbReference type="KEGG" id="rco:RC0590"/>
<dbReference type="HOGENOM" id="CLU_038505_1_1_5"/>
<dbReference type="Proteomes" id="UP000000816">
    <property type="component" value="Chromosome"/>
</dbReference>
<dbReference type="GO" id="GO:0045547">
    <property type="term" value="F:ditrans,polycis-polyprenyl diphosphate synthase [(2E,6E)-farnesyl diphosphate specific] activity"/>
    <property type="evidence" value="ECO:0007669"/>
    <property type="project" value="TreeGrafter"/>
</dbReference>
<dbReference type="GO" id="GO:0000287">
    <property type="term" value="F:magnesium ion binding"/>
    <property type="evidence" value="ECO:0007669"/>
    <property type="project" value="UniProtKB-UniRule"/>
</dbReference>
<dbReference type="GO" id="GO:0016094">
    <property type="term" value="P:polyprenol biosynthetic process"/>
    <property type="evidence" value="ECO:0007669"/>
    <property type="project" value="TreeGrafter"/>
</dbReference>
<dbReference type="CDD" id="cd00475">
    <property type="entry name" value="Cis_IPPS"/>
    <property type="match status" value="1"/>
</dbReference>
<dbReference type="Gene3D" id="3.40.1180.10">
    <property type="entry name" value="Decaprenyl diphosphate synthase-like"/>
    <property type="match status" value="1"/>
</dbReference>
<dbReference type="HAMAP" id="MF_01139">
    <property type="entry name" value="ISPT"/>
    <property type="match status" value="1"/>
</dbReference>
<dbReference type="InterPro" id="IPR001441">
    <property type="entry name" value="UPP_synth-like"/>
</dbReference>
<dbReference type="InterPro" id="IPR018520">
    <property type="entry name" value="UPP_synth-like_CS"/>
</dbReference>
<dbReference type="InterPro" id="IPR036424">
    <property type="entry name" value="UPP_synth-like_sf"/>
</dbReference>
<dbReference type="NCBIfam" id="TIGR00055">
    <property type="entry name" value="uppS"/>
    <property type="match status" value="1"/>
</dbReference>
<dbReference type="PANTHER" id="PTHR10291:SF0">
    <property type="entry name" value="DEHYDRODOLICHYL DIPHOSPHATE SYNTHASE 2"/>
    <property type="match status" value="1"/>
</dbReference>
<dbReference type="PANTHER" id="PTHR10291">
    <property type="entry name" value="DEHYDRODOLICHYL DIPHOSPHATE SYNTHASE FAMILY MEMBER"/>
    <property type="match status" value="1"/>
</dbReference>
<dbReference type="Pfam" id="PF01255">
    <property type="entry name" value="Prenyltransf"/>
    <property type="match status" value="1"/>
</dbReference>
<dbReference type="SUPFAM" id="SSF64005">
    <property type="entry name" value="Undecaprenyl diphosphate synthase"/>
    <property type="match status" value="1"/>
</dbReference>
<dbReference type="PROSITE" id="PS01066">
    <property type="entry name" value="UPP_SYNTHASE"/>
    <property type="match status" value="1"/>
</dbReference>
<name>ISPT_RICCN</name>
<keyword id="KW-0460">Magnesium</keyword>
<keyword id="KW-0479">Metal-binding</keyword>
<keyword id="KW-0808">Transferase</keyword>
<protein>
    <recommendedName>
        <fullName evidence="1">Isoprenyl transferase</fullName>
        <ecNumber evidence="1">2.5.1.-</ecNumber>
    </recommendedName>
</protein>
<comment type="function">
    <text evidence="1">Catalyzes the condensation of isopentenyl diphosphate (IPP) with allylic pyrophosphates generating different type of terpenoids.</text>
</comment>
<comment type="cofactor">
    <cofactor evidence="1">
        <name>Mg(2+)</name>
        <dbReference type="ChEBI" id="CHEBI:18420"/>
    </cofactor>
    <text evidence="1">Binds 2 magnesium ions per subunit.</text>
</comment>
<comment type="subunit">
    <text evidence="1">Homodimer.</text>
</comment>
<comment type="similarity">
    <text evidence="1">Belongs to the UPP synthase family.</text>
</comment>